<feature type="propeptide" id="PRO_0000254876">
    <location>
        <begin position="1"/>
        <end position="112"/>
    </location>
</feature>
<feature type="chain" id="PRO_0000254877" description="Interleukin-1 alpha">
    <location>
        <begin position="113"/>
        <end position="268"/>
    </location>
</feature>
<feature type="region of interest" description="Nuclear localization signal (NLS)" evidence="3">
    <location>
        <begin position="82"/>
        <end position="86"/>
    </location>
</feature>
<feature type="modified residue" description="N6-acetyllysine" evidence="3">
    <location>
        <position position="82"/>
    </location>
</feature>
<feature type="modified residue" description="Phosphoserine" evidence="2">
    <location>
        <position position="87"/>
    </location>
</feature>
<feature type="glycosylation site" description="N-linked (GlcNAc...) asparagine" evidence="4">
    <location>
        <position position="102"/>
    </location>
</feature>
<feature type="glycosylation site" description="N-linked (GlcNAc...) asparagine" evidence="4">
    <location>
        <position position="141"/>
    </location>
</feature>
<keyword id="KW-0007">Acetylation</keyword>
<keyword id="KW-0202">Cytokine</keyword>
<keyword id="KW-0963">Cytoplasm</keyword>
<keyword id="KW-0325">Glycoprotein</keyword>
<keyword id="KW-0395">Inflammatory response</keyword>
<keyword id="KW-0497">Mitogen</keyword>
<keyword id="KW-0539">Nucleus</keyword>
<keyword id="KW-0597">Phosphoprotein</keyword>
<keyword id="KW-0666">Pyrogen</keyword>
<keyword id="KW-0964">Secreted</keyword>
<organism>
    <name type="scientific">Bubalus carabanensis</name>
    <name type="common">Swamp type water buffalo</name>
    <name type="synonym">Bubalus bubalis carabanensis</name>
    <dbReference type="NCBI Taxonomy" id="3119969"/>
    <lineage>
        <taxon>Eukaryota</taxon>
        <taxon>Metazoa</taxon>
        <taxon>Chordata</taxon>
        <taxon>Craniata</taxon>
        <taxon>Vertebrata</taxon>
        <taxon>Euteleostomi</taxon>
        <taxon>Mammalia</taxon>
        <taxon>Eutheria</taxon>
        <taxon>Laurasiatheria</taxon>
        <taxon>Artiodactyla</taxon>
        <taxon>Ruminantia</taxon>
        <taxon>Pecora</taxon>
        <taxon>Bovidae</taxon>
        <taxon>Bovinae</taxon>
        <taxon>Bubalus</taxon>
    </lineage>
</organism>
<accession>Q3HWU1</accession>
<name>IL1A_BUBCA</name>
<evidence type="ECO:0000250" key="1"/>
<evidence type="ECO:0000250" key="2">
    <source>
        <dbReference type="UniProtKB" id="P01582"/>
    </source>
</evidence>
<evidence type="ECO:0000250" key="3">
    <source>
        <dbReference type="UniProtKB" id="P01583"/>
    </source>
</evidence>
<evidence type="ECO:0000255" key="4"/>
<evidence type="ECO:0000305" key="5"/>
<sequence>MAKVPDLFEDLKNCYSENEDYSSEIDHLSLNQKSFYDASYEPLREDQMDKFMSLDTSETSKTSRLSFKENVVMVAASGKILKKRRLSLNQFITDDDLEAIANNTEEEIIKPRSAHYSFQSNVKYNLLRVIHQECILNDALNQSLIRDLSGPYLTAATLNNLEEAVKFDMVAYVSEEDSQLPVTLRISKTQLFVSAQNEDEPVLLKEMPETPKIIKDETNLLFFWEKHGSMDYFKSVAHPKLFIATKQEKLVHMASGPPSVTDFQILEK</sequence>
<dbReference type="EMBL" id="DQ188096">
    <property type="protein sequence ID" value="ABA33680.1"/>
    <property type="molecule type" value="mRNA"/>
</dbReference>
<dbReference type="SMR" id="Q3HWU1"/>
<dbReference type="GlyCosmos" id="Q3HWU1">
    <property type="glycosylation" value="2 sites, No reported glycans"/>
</dbReference>
<dbReference type="GO" id="GO:0005829">
    <property type="term" value="C:cytosol"/>
    <property type="evidence" value="ECO:0000250"/>
    <property type="project" value="UniProtKB"/>
</dbReference>
<dbReference type="GO" id="GO:0005615">
    <property type="term" value="C:extracellular space"/>
    <property type="evidence" value="ECO:0000250"/>
    <property type="project" value="UniProtKB"/>
</dbReference>
<dbReference type="GO" id="GO:0005634">
    <property type="term" value="C:nucleus"/>
    <property type="evidence" value="ECO:0007669"/>
    <property type="project" value="UniProtKB-SubCell"/>
</dbReference>
<dbReference type="GO" id="GO:0005507">
    <property type="term" value="F:copper ion binding"/>
    <property type="evidence" value="ECO:0000250"/>
    <property type="project" value="UniProtKB"/>
</dbReference>
<dbReference type="GO" id="GO:0005125">
    <property type="term" value="F:cytokine activity"/>
    <property type="evidence" value="ECO:0007669"/>
    <property type="project" value="UniProtKB-KW"/>
</dbReference>
<dbReference type="GO" id="GO:0005149">
    <property type="term" value="F:interleukin-1 receptor binding"/>
    <property type="evidence" value="ECO:0007669"/>
    <property type="project" value="InterPro"/>
</dbReference>
<dbReference type="GO" id="GO:0034605">
    <property type="term" value="P:cellular response to heat"/>
    <property type="evidence" value="ECO:0000250"/>
    <property type="project" value="UniProtKB"/>
</dbReference>
<dbReference type="GO" id="GO:0071222">
    <property type="term" value="P:cellular response to lipopolysaccharide"/>
    <property type="evidence" value="ECO:0007669"/>
    <property type="project" value="TreeGrafter"/>
</dbReference>
<dbReference type="GO" id="GO:0019221">
    <property type="term" value="P:cytokine-mediated signaling pathway"/>
    <property type="evidence" value="ECO:0007669"/>
    <property type="project" value="TreeGrafter"/>
</dbReference>
<dbReference type="GO" id="GO:0001660">
    <property type="term" value="P:fever generation"/>
    <property type="evidence" value="ECO:0007669"/>
    <property type="project" value="UniProtKB-KW"/>
</dbReference>
<dbReference type="GO" id="GO:0006955">
    <property type="term" value="P:immune response"/>
    <property type="evidence" value="ECO:0007669"/>
    <property type="project" value="InterPro"/>
</dbReference>
<dbReference type="GO" id="GO:0051781">
    <property type="term" value="P:positive regulation of cell division"/>
    <property type="evidence" value="ECO:0007669"/>
    <property type="project" value="UniProtKB-KW"/>
</dbReference>
<dbReference type="GO" id="GO:0010628">
    <property type="term" value="P:positive regulation of gene expression"/>
    <property type="evidence" value="ECO:0007669"/>
    <property type="project" value="TreeGrafter"/>
</dbReference>
<dbReference type="GO" id="GO:0033092">
    <property type="term" value="P:positive regulation of immature T cell proliferation in thymus"/>
    <property type="evidence" value="ECO:0007669"/>
    <property type="project" value="TreeGrafter"/>
</dbReference>
<dbReference type="GO" id="GO:0046688">
    <property type="term" value="P:response to copper ion"/>
    <property type="evidence" value="ECO:0000250"/>
    <property type="project" value="UniProtKB"/>
</dbReference>
<dbReference type="CDD" id="cd23295">
    <property type="entry name" value="beta-trefoil_IL1A"/>
    <property type="match status" value="1"/>
</dbReference>
<dbReference type="FunFam" id="2.80.10.50:FF:000049">
    <property type="entry name" value="Interleukin-1 alpha"/>
    <property type="match status" value="1"/>
</dbReference>
<dbReference type="Gene3D" id="2.80.10.50">
    <property type="match status" value="1"/>
</dbReference>
<dbReference type="InterPro" id="IPR003295">
    <property type="entry name" value="IL-1_alpha"/>
</dbReference>
<dbReference type="InterPro" id="IPR020877">
    <property type="entry name" value="IL-1_CS"/>
</dbReference>
<dbReference type="InterPro" id="IPR000975">
    <property type="entry name" value="IL-1_fam"/>
</dbReference>
<dbReference type="InterPro" id="IPR003502">
    <property type="entry name" value="IL-1_propep"/>
</dbReference>
<dbReference type="InterPro" id="IPR008996">
    <property type="entry name" value="IL1/FGF"/>
</dbReference>
<dbReference type="PANTHER" id="PTHR10078:SF33">
    <property type="entry name" value="INTERLEUKIN-1 ALPHA"/>
    <property type="match status" value="1"/>
</dbReference>
<dbReference type="PANTHER" id="PTHR10078">
    <property type="entry name" value="INTERLEUKIN-1 FAMILY MEMBER"/>
    <property type="match status" value="1"/>
</dbReference>
<dbReference type="Pfam" id="PF00340">
    <property type="entry name" value="IL1"/>
    <property type="match status" value="1"/>
</dbReference>
<dbReference type="Pfam" id="PF02394">
    <property type="entry name" value="IL1_propep"/>
    <property type="match status" value="1"/>
</dbReference>
<dbReference type="PRINTS" id="PR00264">
    <property type="entry name" value="INTERLEUKIN1"/>
</dbReference>
<dbReference type="PRINTS" id="PR01358">
    <property type="entry name" value="INTRLEUKIN1A"/>
</dbReference>
<dbReference type="PRINTS" id="PR01357">
    <property type="entry name" value="INTRLEUKN1AB"/>
</dbReference>
<dbReference type="SMART" id="SM00125">
    <property type="entry name" value="IL1"/>
    <property type="match status" value="1"/>
</dbReference>
<dbReference type="SUPFAM" id="SSF50353">
    <property type="entry name" value="Cytokine"/>
    <property type="match status" value="1"/>
</dbReference>
<dbReference type="PROSITE" id="PS00253">
    <property type="entry name" value="INTERLEUKIN_1"/>
    <property type="match status" value="1"/>
</dbReference>
<gene>
    <name type="primary">IL1A</name>
</gene>
<reference key="1">
    <citation type="submission" date="2005-08" db="EMBL/GenBank/DDBJ databases">
        <title>Comparative immunological analysis of bubaline species through cytokine cloning and nucleotide sequencing.</title>
        <authorList>
            <person name="Mingala C.N."/>
            <person name="Raadan O."/>
            <person name="Konnai S."/>
            <person name="Ohashi K."/>
            <person name="Onuma M."/>
        </authorList>
    </citation>
    <scope>NUCLEOTIDE SEQUENCE [MRNA]</scope>
</reference>
<proteinExistence type="evidence at transcript level"/>
<comment type="function">
    <text evidence="3">Cytokine constitutively present intracellularly in nearly all resting non-hematopoietic cells that plays an important role in inflammation and bridges the innate and adaptive immune systems. After binding to its receptor IL1R1 together with its accessory protein IL1RAP, forms the high affinity interleukin-1 receptor complex. Signaling involves the recruitment of adapter molecules such as MYD88, IRAK1 or IRAK4. In turn, mediates the activation of NF-kappa-B and the three MAPK pathways p38, p42/p44 and JNK pathways. Within the cell, acts as an alarmin and cell death results in its liberation in the extracellular space after disruption of the cell membrane to induce inflammation and alert the host to injury or damage. In addition to its role as a danger signal, which occurs when the cytokine is passively released by cell necrosis, directly senses DNA damage and acts as signal for genotoxic stress without loss of cell integrity.</text>
</comment>
<comment type="subunit">
    <text evidence="3">Monomer. Interacts with TMED10; the interaction mediates the translocation from the cytoplasm into the ERGIC (endoplasmic reticulum-Golgi intermediate compartment) and thereby secretion. Interacts with IL1R1. Interacts with S100A13; this interaction is the first step in the export of IL1A, followed by direct translocation of this complex across the plasma membrane.</text>
</comment>
<comment type="subcellular location">
    <subcellularLocation>
        <location evidence="3">Nucleus</location>
    </subcellularLocation>
    <subcellularLocation>
        <location evidence="3">Cytoplasm</location>
    </subcellularLocation>
    <subcellularLocation>
        <location evidence="3">Secreted</location>
    </subcellularLocation>
    <text evidence="3">The lack of a specific hydrophobic segment in the precursor sequence suggests that IL-1 is released by damaged cells or is secreted by a mechanism differing from that used for other secretory proteins. The secretion is dependent on protein unfolding and facilitated by the cargo receptor TMED10; it results in protein translocation from the cytoplasm into the ERGIC (endoplasmic reticulum-Golgi intermediate compartment) followed by vesicle entry and secretion. Recruited to DNA damage sites and secreted after genotoxic stress.</text>
</comment>
<comment type="domain">
    <text evidence="1">The similarity among the IL-1 precursors suggests that the amino ends of these proteins serve some as yet undefined function.</text>
</comment>
<comment type="PTM">
    <text evidence="3">Acetylated within its nuclear localization sequence, which impacts subcellular localization.</text>
</comment>
<comment type="PTM">
    <text evidence="3">Proteolytic processed by CAPN1 in a calcium-dependent manner. Cleavage from 31 kDa precursor to 18 kDa biologically active molecules.</text>
</comment>
<comment type="PTM">
    <text evidence="3">Phosphorylated. Phosphorylation greatly enhances susceptibility to digestion and promotes the conversion of pre-IL1A alpha to the biologically active IL1A.</text>
</comment>
<comment type="similarity">
    <text evidence="5">Belongs to the IL-1 family.</text>
</comment>
<protein>
    <recommendedName>
        <fullName>Interleukin-1 alpha</fullName>
        <shortName>IL-1 alpha</shortName>
    </recommendedName>
</protein>